<accession>A0RPR5</accession>
<keyword id="KW-0687">Ribonucleoprotein</keyword>
<keyword id="KW-0689">Ribosomal protein</keyword>
<reference key="1">
    <citation type="submission" date="2006-11" db="EMBL/GenBank/DDBJ databases">
        <title>Sequence of Campylobacter fetus subsp. fetus 82-40.</title>
        <authorList>
            <person name="Fouts D.E."/>
            <person name="Nelson K.E."/>
        </authorList>
    </citation>
    <scope>NUCLEOTIDE SEQUENCE [LARGE SCALE GENOMIC DNA]</scope>
    <source>
        <strain>82-40</strain>
    </source>
</reference>
<evidence type="ECO:0000255" key="1">
    <source>
        <dbReference type="HAMAP-Rule" id="MF_00402"/>
    </source>
</evidence>
<evidence type="ECO:0000305" key="2"/>
<feature type="chain" id="PRO_1000049653" description="Large ribosomal subunit protein bL19">
    <location>
        <begin position="1"/>
        <end position="118"/>
    </location>
</feature>
<name>RL19_CAMFF</name>
<proteinExistence type="inferred from homology"/>
<gene>
    <name evidence="1" type="primary">rplS</name>
    <name type="ordered locus">CFF8240_1034</name>
</gene>
<comment type="function">
    <text evidence="1">This protein is located at the 30S-50S ribosomal subunit interface and may play a role in the structure and function of the aminoacyl-tRNA binding site.</text>
</comment>
<comment type="similarity">
    <text evidence="1">Belongs to the bacterial ribosomal protein bL19 family.</text>
</comment>
<dbReference type="EMBL" id="CP000487">
    <property type="protein sequence ID" value="ABK82391.1"/>
    <property type="molecule type" value="Genomic_DNA"/>
</dbReference>
<dbReference type="RefSeq" id="WP_002849599.1">
    <property type="nucleotide sequence ID" value="NC_008599.1"/>
</dbReference>
<dbReference type="SMR" id="A0RPR5"/>
<dbReference type="GeneID" id="61064862"/>
<dbReference type="KEGG" id="cff:CFF8240_1034"/>
<dbReference type="eggNOG" id="COG0335">
    <property type="taxonomic scope" value="Bacteria"/>
</dbReference>
<dbReference type="HOGENOM" id="CLU_103507_2_2_7"/>
<dbReference type="Proteomes" id="UP000000760">
    <property type="component" value="Chromosome"/>
</dbReference>
<dbReference type="GO" id="GO:0022625">
    <property type="term" value="C:cytosolic large ribosomal subunit"/>
    <property type="evidence" value="ECO:0007669"/>
    <property type="project" value="TreeGrafter"/>
</dbReference>
<dbReference type="GO" id="GO:0003735">
    <property type="term" value="F:structural constituent of ribosome"/>
    <property type="evidence" value="ECO:0007669"/>
    <property type="project" value="InterPro"/>
</dbReference>
<dbReference type="GO" id="GO:0006412">
    <property type="term" value="P:translation"/>
    <property type="evidence" value="ECO:0007669"/>
    <property type="project" value="UniProtKB-UniRule"/>
</dbReference>
<dbReference type="FunFam" id="2.30.30.790:FF:000001">
    <property type="entry name" value="50S ribosomal protein L19"/>
    <property type="match status" value="1"/>
</dbReference>
<dbReference type="Gene3D" id="2.30.30.790">
    <property type="match status" value="1"/>
</dbReference>
<dbReference type="HAMAP" id="MF_00402">
    <property type="entry name" value="Ribosomal_bL19"/>
    <property type="match status" value="1"/>
</dbReference>
<dbReference type="InterPro" id="IPR001857">
    <property type="entry name" value="Ribosomal_bL19"/>
</dbReference>
<dbReference type="InterPro" id="IPR018257">
    <property type="entry name" value="Ribosomal_bL19_CS"/>
</dbReference>
<dbReference type="InterPro" id="IPR038657">
    <property type="entry name" value="Ribosomal_bL19_sf"/>
</dbReference>
<dbReference type="InterPro" id="IPR008991">
    <property type="entry name" value="Translation_prot_SH3-like_sf"/>
</dbReference>
<dbReference type="NCBIfam" id="TIGR01024">
    <property type="entry name" value="rplS_bact"/>
    <property type="match status" value="1"/>
</dbReference>
<dbReference type="PANTHER" id="PTHR15680:SF9">
    <property type="entry name" value="LARGE RIBOSOMAL SUBUNIT PROTEIN BL19M"/>
    <property type="match status" value="1"/>
</dbReference>
<dbReference type="PANTHER" id="PTHR15680">
    <property type="entry name" value="RIBOSOMAL PROTEIN L19"/>
    <property type="match status" value="1"/>
</dbReference>
<dbReference type="Pfam" id="PF01245">
    <property type="entry name" value="Ribosomal_L19"/>
    <property type="match status" value="1"/>
</dbReference>
<dbReference type="PIRSF" id="PIRSF002191">
    <property type="entry name" value="Ribosomal_L19"/>
    <property type="match status" value="1"/>
</dbReference>
<dbReference type="PRINTS" id="PR00061">
    <property type="entry name" value="RIBOSOMALL19"/>
</dbReference>
<dbReference type="SUPFAM" id="SSF50104">
    <property type="entry name" value="Translation proteins SH3-like domain"/>
    <property type="match status" value="1"/>
</dbReference>
<dbReference type="PROSITE" id="PS01015">
    <property type="entry name" value="RIBOSOMAL_L19"/>
    <property type="match status" value="1"/>
</dbReference>
<sequence length="118" mass="13603">MRNKYIEAFENAQIENKSVPDFRAGDTLRIAIRIKEGDKTRVQNFEGICIARRGSGSGETFIIRKIGANSVGVERIFPIYSESLESITVLRRGRIRRSKLFYLRDRRGKAARIKELKK</sequence>
<protein>
    <recommendedName>
        <fullName evidence="1">Large ribosomal subunit protein bL19</fullName>
    </recommendedName>
    <alternativeName>
        <fullName evidence="2">50S ribosomal protein L19</fullName>
    </alternativeName>
</protein>
<organism>
    <name type="scientific">Campylobacter fetus subsp. fetus (strain 82-40)</name>
    <dbReference type="NCBI Taxonomy" id="360106"/>
    <lineage>
        <taxon>Bacteria</taxon>
        <taxon>Pseudomonadati</taxon>
        <taxon>Campylobacterota</taxon>
        <taxon>Epsilonproteobacteria</taxon>
        <taxon>Campylobacterales</taxon>
        <taxon>Campylobacteraceae</taxon>
        <taxon>Campylobacter</taxon>
    </lineage>
</organism>